<keyword id="KW-0150">Chloroplast</keyword>
<keyword id="KW-0240">DNA-directed RNA polymerase</keyword>
<keyword id="KW-0548">Nucleotidyltransferase</keyword>
<keyword id="KW-0934">Plastid</keyword>
<keyword id="KW-0804">Transcription</keyword>
<keyword id="KW-0808">Transferase</keyword>
<gene>
    <name evidence="1" type="primary">rpoB</name>
</gene>
<organism>
    <name type="scientific">Guillardia theta</name>
    <name type="common">Cryptophyte</name>
    <name type="synonym">Cryptomonas phi</name>
    <dbReference type="NCBI Taxonomy" id="55529"/>
    <lineage>
        <taxon>Eukaryota</taxon>
        <taxon>Cryptophyceae</taxon>
        <taxon>Pyrenomonadales</taxon>
        <taxon>Geminigeraceae</taxon>
        <taxon>Guillardia</taxon>
    </lineage>
</organism>
<evidence type="ECO:0000255" key="1">
    <source>
        <dbReference type="HAMAP-Rule" id="MF_01321"/>
    </source>
</evidence>
<feature type="chain" id="PRO_0000048024" description="DNA-directed RNA polymerase subunit beta">
    <location>
        <begin position="1"/>
        <end position="1096"/>
    </location>
</feature>
<geneLocation type="chloroplast"/>
<comment type="function">
    <text evidence="1">DNA-dependent RNA polymerase catalyzes the transcription of DNA into RNA using the four ribonucleoside triphosphates as substrates.</text>
</comment>
<comment type="catalytic activity">
    <reaction evidence="1">
        <text>RNA(n) + a ribonucleoside 5'-triphosphate = RNA(n+1) + diphosphate</text>
        <dbReference type="Rhea" id="RHEA:21248"/>
        <dbReference type="Rhea" id="RHEA-COMP:14527"/>
        <dbReference type="Rhea" id="RHEA-COMP:17342"/>
        <dbReference type="ChEBI" id="CHEBI:33019"/>
        <dbReference type="ChEBI" id="CHEBI:61557"/>
        <dbReference type="ChEBI" id="CHEBI:140395"/>
        <dbReference type="EC" id="2.7.7.6"/>
    </reaction>
</comment>
<comment type="subunit">
    <text evidence="1">In plastids the minimal PEP RNA polymerase catalytic core is composed of four subunits: alpha, beta, beta', and beta''. When a (nuclear-encoded) sigma factor is associated with the core the holoenzyme is formed, which can initiate transcription.</text>
</comment>
<comment type="subcellular location">
    <subcellularLocation>
        <location>Plastid</location>
        <location>Chloroplast</location>
    </subcellularLocation>
</comment>
<comment type="similarity">
    <text evidence="1">Belongs to the RNA polymerase beta chain family.</text>
</comment>
<sequence>MFNTTFANRTLPDLVEIQRASFCWFLNEGLAEEIQSFSPIVNYTGNLELHLFGDQYTLRYPKHNINECKRRDTTYSVQIYVPAQLINRETGVIKEQEVFIGDLPLMTDRGTFIINGAERVIVNQIVRSPGIYYKSELDKQGRRTYSSSLISNRGAWVKFETDRNDLVWVRIDKTRKIPAHVFLKAMGLSDTDIYNGLRHPEYLKKTFRFEGNYTTETALIQMYNKLRPGEPATVTGGQQLLYSRFFDPKRYDLGKVGRYKLNKKLNLSVPENVRVLTPQDTLAAIDYLINLKFEIGETDDIDHLGNRRVRSVGELLQNQVRIGLNRLERIIRERMTICDITSLTPNTLVNPKPIIASIREFFGSSQLSQFMDQTNPLAELTHKRRISALGPGGLNRDRAGFGVRDIHPSHYGRICPIETPEGPNAGLIGVLATHARINTYGFIEAPFFKVQDGQVYNHSQPIYLTADQEDKYRIAPGDITLDETNRIATKIVPIKYRQEFTTTKPNQVDFIAVSPIQVISIATSLIPFLEHDDANRALMGSNMQRQAVPLLYPESPLVGTGLEAQAARDSGMVVVSIEDGQVTFVSGDKICVTNKKGDEIAYYLQKYQRSNQDTCINQRPTVWLGEDVIEGQVIADGAATEGGELALGQNILVAYLPWEGYNYEDAFLINERLVYNDVYTSVHIEKYEIEARQTKLGSEEITRELPNVGEAALRKLDENGIIVIGSWVEAGDILIGKVTPKGESDQPPEGKLLRAIFGEKARDVRDTSLRVPNGGRGRILDVRIFTREKGDELPTGANIVIRVYIAQSRKIQVGDKMAGRHGNKGIISRILPRQDMPYLPDGTPVDLVLNPLGVPSRMNVGQIFECLLGLAAENLNKRFKITPFDEMHGAEASRVLVNEKLNEAKIKTGENWLFDLRHPGKITLYDGRTGEAFDNPVTIGVSYMLKLVHLVDDKIHARSTGPYSLVTQQPLGGRAQHGGQRLGEMEVWALEAFGASYTLQELLTVKSDDMQGRNETLNAIVKGKPIPRPGTPESFKVLMRELQSLGLDIGAYKIENLPDGQTRGIEVDLMMNYQQSRLFKPLYESMQTKNNENLFL</sequence>
<name>RPOB_GUITH</name>
<proteinExistence type="inferred from homology"/>
<protein>
    <recommendedName>
        <fullName evidence="1">DNA-directed RNA polymerase subunit beta</fullName>
        <ecNumber evidence="1">2.7.7.6</ecNumber>
    </recommendedName>
    <alternativeName>
        <fullName evidence="1">PEP</fullName>
    </alternativeName>
    <alternativeName>
        <fullName evidence="1">Plastid-encoded RNA polymerase subunit beta</fullName>
        <shortName evidence="1">RNA polymerase subunit beta</shortName>
    </alternativeName>
</protein>
<dbReference type="EC" id="2.7.7.6" evidence="1"/>
<dbReference type="EMBL" id="AF041468">
    <property type="protein sequence ID" value="AAC35676.1"/>
    <property type="molecule type" value="Genomic_DNA"/>
</dbReference>
<dbReference type="RefSeq" id="NP_050742.1">
    <property type="nucleotide sequence ID" value="NC_000926.1"/>
</dbReference>
<dbReference type="SMR" id="O78485"/>
<dbReference type="GeneID" id="857047"/>
<dbReference type="HOGENOM" id="CLU_000524_4_1_1"/>
<dbReference type="OMA" id="FMTWEGY"/>
<dbReference type="GO" id="GO:0009507">
    <property type="term" value="C:chloroplast"/>
    <property type="evidence" value="ECO:0007669"/>
    <property type="project" value="UniProtKB-SubCell"/>
</dbReference>
<dbReference type="GO" id="GO:0000428">
    <property type="term" value="C:DNA-directed RNA polymerase complex"/>
    <property type="evidence" value="ECO:0007669"/>
    <property type="project" value="UniProtKB-KW"/>
</dbReference>
<dbReference type="GO" id="GO:0005739">
    <property type="term" value="C:mitochondrion"/>
    <property type="evidence" value="ECO:0007669"/>
    <property type="project" value="GOC"/>
</dbReference>
<dbReference type="GO" id="GO:0003677">
    <property type="term" value="F:DNA binding"/>
    <property type="evidence" value="ECO:0007669"/>
    <property type="project" value="UniProtKB-UniRule"/>
</dbReference>
<dbReference type="GO" id="GO:0003899">
    <property type="term" value="F:DNA-directed RNA polymerase activity"/>
    <property type="evidence" value="ECO:0007669"/>
    <property type="project" value="UniProtKB-UniRule"/>
</dbReference>
<dbReference type="GO" id="GO:0032549">
    <property type="term" value="F:ribonucleoside binding"/>
    <property type="evidence" value="ECO:0007669"/>
    <property type="project" value="InterPro"/>
</dbReference>
<dbReference type="GO" id="GO:0006351">
    <property type="term" value="P:DNA-templated transcription"/>
    <property type="evidence" value="ECO:0007669"/>
    <property type="project" value="UniProtKB-UniRule"/>
</dbReference>
<dbReference type="CDD" id="cd00653">
    <property type="entry name" value="RNA_pol_B_RPB2"/>
    <property type="match status" value="1"/>
</dbReference>
<dbReference type="Gene3D" id="2.40.50.100">
    <property type="match status" value="1"/>
</dbReference>
<dbReference type="Gene3D" id="2.40.50.150">
    <property type="match status" value="1"/>
</dbReference>
<dbReference type="Gene3D" id="3.90.1100.10">
    <property type="match status" value="1"/>
</dbReference>
<dbReference type="Gene3D" id="2.30.150.10">
    <property type="entry name" value="DNA-directed RNA polymerase, beta subunit, external 1 domain"/>
    <property type="match status" value="1"/>
</dbReference>
<dbReference type="Gene3D" id="2.40.270.10">
    <property type="entry name" value="DNA-directed RNA polymerase, subunit 2, domain 6"/>
    <property type="match status" value="1"/>
</dbReference>
<dbReference type="Gene3D" id="3.90.1800.10">
    <property type="entry name" value="RNA polymerase alpha subunit dimerisation domain"/>
    <property type="match status" value="1"/>
</dbReference>
<dbReference type="Gene3D" id="3.90.1110.10">
    <property type="entry name" value="RNA polymerase Rpb2, domain 2"/>
    <property type="match status" value="1"/>
</dbReference>
<dbReference type="HAMAP" id="MF_01321">
    <property type="entry name" value="RNApol_bact_RpoB"/>
    <property type="match status" value="1"/>
</dbReference>
<dbReference type="InterPro" id="IPR042107">
    <property type="entry name" value="DNA-dir_RNA_pol_bsu_ext_1_sf"/>
</dbReference>
<dbReference type="InterPro" id="IPR019462">
    <property type="entry name" value="DNA-dir_RNA_pol_bsu_external_1"/>
</dbReference>
<dbReference type="InterPro" id="IPR015712">
    <property type="entry name" value="DNA-dir_RNA_pol_su2"/>
</dbReference>
<dbReference type="InterPro" id="IPR007120">
    <property type="entry name" value="DNA-dir_RNAP_su2_dom"/>
</dbReference>
<dbReference type="InterPro" id="IPR037033">
    <property type="entry name" value="DNA-dir_RNAP_su2_hyb_sf"/>
</dbReference>
<dbReference type="InterPro" id="IPR010243">
    <property type="entry name" value="RNA_pol_bsu_bac"/>
</dbReference>
<dbReference type="InterPro" id="IPR007121">
    <property type="entry name" value="RNA_pol_bsu_CS"/>
</dbReference>
<dbReference type="InterPro" id="IPR007644">
    <property type="entry name" value="RNA_pol_bsu_protrusion"/>
</dbReference>
<dbReference type="InterPro" id="IPR007642">
    <property type="entry name" value="RNA_pol_Rpb2_2"/>
</dbReference>
<dbReference type="InterPro" id="IPR037034">
    <property type="entry name" value="RNA_pol_Rpb2_2_sf"/>
</dbReference>
<dbReference type="InterPro" id="IPR007645">
    <property type="entry name" value="RNA_pol_Rpb2_3"/>
</dbReference>
<dbReference type="InterPro" id="IPR007641">
    <property type="entry name" value="RNA_pol_Rpb2_7"/>
</dbReference>
<dbReference type="InterPro" id="IPR014724">
    <property type="entry name" value="RNA_pol_RPB2_OB-fold"/>
</dbReference>
<dbReference type="NCBIfam" id="NF001616">
    <property type="entry name" value="PRK00405.1"/>
    <property type="match status" value="1"/>
</dbReference>
<dbReference type="NCBIfam" id="TIGR02013">
    <property type="entry name" value="rpoB"/>
    <property type="match status" value="1"/>
</dbReference>
<dbReference type="PANTHER" id="PTHR20856">
    <property type="entry name" value="DNA-DIRECTED RNA POLYMERASE I SUBUNIT 2"/>
    <property type="match status" value="1"/>
</dbReference>
<dbReference type="Pfam" id="PF04563">
    <property type="entry name" value="RNA_pol_Rpb2_1"/>
    <property type="match status" value="1"/>
</dbReference>
<dbReference type="Pfam" id="PF04561">
    <property type="entry name" value="RNA_pol_Rpb2_2"/>
    <property type="match status" value="1"/>
</dbReference>
<dbReference type="Pfam" id="PF04565">
    <property type="entry name" value="RNA_pol_Rpb2_3"/>
    <property type="match status" value="1"/>
</dbReference>
<dbReference type="Pfam" id="PF10385">
    <property type="entry name" value="RNA_pol_Rpb2_45"/>
    <property type="match status" value="1"/>
</dbReference>
<dbReference type="Pfam" id="PF00562">
    <property type="entry name" value="RNA_pol_Rpb2_6"/>
    <property type="match status" value="1"/>
</dbReference>
<dbReference type="Pfam" id="PF04560">
    <property type="entry name" value="RNA_pol_Rpb2_7"/>
    <property type="match status" value="1"/>
</dbReference>
<dbReference type="SUPFAM" id="SSF64484">
    <property type="entry name" value="beta and beta-prime subunits of DNA dependent RNA-polymerase"/>
    <property type="match status" value="1"/>
</dbReference>
<dbReference type="PROSITE" id="PS01166">
    <property type="entry name" value="RNA_POL_BETA"/>
    <property type="match status" value="1"/>
</dbReference>
<reference key="1">
    <citation type="journal article" date="1999" name="J. Mol. Evol.">
        <title>The plastid genome of the cryptophyte alga, Guillardia theta: complete sequence and conserved synteny groups confirm its common ancestry with red algae.</title>
        <authorList>
            <person name="Douglas S.E."/>
            <person name="Penny S.L."/>
        </authorList>
    </citation>
    <scope>NUCLEOTIDE SEQUENCE [LARGE SCALE GENOMIC DNA]</scope>
</reference>
<accession>O78485</accession>